<organism>
    <name type="scientific">Shigella boydii serotype 18 (strain CDC 3083-94 / BS512)</name>
    <dbReference type="NCBI Taxonomy" id="344609"/>
    <lineage>
        <taxon>Bacteria</taxon>
        <taxon>Pseudomonadati</taxon>
        <taxon>Pseudomonadota</taxon>
        <taxon>Gammaproteobacteria</taxon>
        <taxon>Enterobacterales</taxon>
        <taxon>Enterobacteriaceae</taxon>
        <taxon>Shigella</taxon>
    </lineage>
</organism>
<feature type="chain" id="PRO_1000145438" description="Peptide methionine sulfoxide reductase MsrA">
    <location>
        <begin position="1"/>
        <end position="212"/>
    </location>
</feature>
<feature type="active site" evidence="1">
    <location>
        <position position="52"/>
    </location>
</feature>
<protein>
    <recommendedName>
        <fullName evidence="1">Peptide methionine sulfoxide reductase MsrA</fullName>
        <shortName evidence="1">Protein-methionine-S-oxide reductase</shortName>
        <ecNumber evidence="1">1.8.4.11</ecNumber>
    </recommendedName>
    <alternativeName>
        <fullName evidence="1">Peptide-methionine (S)-S-oxide reductase</fullName>
        <shortName evidence="1">Peptide Met(O) reductase</shortName>
    </alternativeName>
</protein>
<sequence length="212" mass="23246">MSLFDKKHLVSPADALPGRNTPMPVATLHAVNGHSMTNVPDGMEIAIFAMGCFWGVESLFWQLPGVYSTAAGYTGGYTPNPTYREVCSGDTGHAEAVRIVYDPSVISYEQLLQVFWENHDPAQGMRQGNDHGTQYRSAIYPLTPEQDAAARASLERFQAAMLAADDDRHITTEIANATPFYYAEDDHQQYLHKNPYGYCGIGGIGVCLPPEA</sequence>
<keyword id="KW-0560">Oxidoreductase</keyword>
<keyword id="KW-1185">Reference proteome</keyword>
<dbReference type="EC" id="1.8.4.11" evidence="1"/>
<dbReference type="EMBL" id="CP001063">
    <property type="protein sequence ID" value="ACD06611.1"/>
    <property type="molecule type" value="Genomic_DNA"/>
</dbReference>
<dbReference type="RefSeq" id="WP_012421249.1">
    <property type="nucleotide sequence ID" value="NC_010658.1"/>
</dbReference>
<dbReference type="SMR" id="B2TZL3"/>
<dbReference type="STRING" id="344609.SbBS512_E4863"/>
<dbReference type="KEGG" id="sbc:SbBS512_E4863"/>
<dbReference type="HOGENOM" id="CLU_031040_10_3_6"/>
<dbReference type="Proteomes" id="UP000001030">
    <property type="component" value="Chromosome"/>
</dbReference>
<dbReference type="GO" id="GO:0005737">
    <property type="term" value="C:cytoplasm"/>
    <property type="evidence" value="ECO:0007669"/>
    <property type="project" value="TreeGrafter"/>
</dbReference>
<dbReference type="GO" id="GO:0036456">
    <property type="term" value="F:L-methionine-(S)-S-oxide reductase activity"/>
    <property type="evidence" value="ECO:0007669"/>
    <property type="project" value="TreeGrafter"/>
</dbReference>
<dbReference type="GO" id="GO:0008113">
    <property type="term" value="F:peptide-methionine (S)-S-oxide reductase activity"/>
    <property type="evidence" value="ECO:0007669"/>
    <property type="project" value="UniProtKB-UniRule"/>
</dbReference>
<dbReference type="GO" id="GO:0034599">
    <property type="term" value="P:cellular response to oxidative stress"/>
    <property type="evidence" value="ECO:0007669"/>
    <property type="project" value="TreeGrafter"/>
</dbReference>
<dbReference type="GO" id="GO:0036211">
    <property type="term" value="P:protein modification process"/>
    <property type="evidence" value="ECO:0007669"/>
    <property type="project" value="UniProtKB-UniRule"/>
</dbReference>
<dbReference type="FunFam" id="3.30.1060.10:FF:000001">
    <property type="entry name" value="Peptide methionine sulfoxide reductase MsrA"/>
    <property type="match status" value="1"/>
</dbReference>
<dbReference type="Gene3D" id="3.30.1060.10">
    <property type="entry name" value="Peptide methionine sulphoxide reductase MsrA"/>
    <property type="match status" value="1"/>
</dbReference>
<dbReference type="HAMAP" id="MF_01401">
    <property type="entry name" value="MsrA"/>
    <property type="match status" value="1"/>
</dbReference>
<dbReference type="InterPro" id="IPR002569">
    <property type="entry name" value="Met_Sox_Rdtase_MsrA_dom"/>
</dbReference>
<dbReference type="InterPro" id="IPR036509">
    <property type="entry name" value="Met_Sox_Rdtase_MsrA_sf"/>
</dbReference>
<dbReference type="InterPro" id="IPR050162">
    <property type="entry name" value="MsrA_MetSO_reductase"/>
</dbReference>
<dbReference type="NCBIfam" id="TIGR00401">
    <property type="entry name" value="msrA"/>
    <property type="match status" value="1"/>
</dbReference>
<dbReference type="PANTHER" id="PTHR42799">
    <property type="entry name" value="MITOCHONDRIAL PEPTIDE METHIONINE SULFOXIDE REDUCTASE"/>
    <property type="match status" value="1"/>
</dbReference>
<dbReference type="PANTHER" id="PTHR42799:SF2">
    <property type="entry name" value="MITOCHONDRIAL PEPTIDE METHIONINE SULFOXIDE REDUCTASE"/>
    <property type="match status" value="1"/>
</dbReference>
<dbReference type="Pfam" id="PF01625">
    <property type="entry name" value="PMSR"/>
    <property type="match status" value="1"/>
</dbReference>
<dbReference type="SUPFAM" id="SSF55068">
    <property type="entry name" value="Peptide methionine sulfoxide reductase"/>
    <property type="match status" value="1"/>
</dbReference>
<name>MSRA_SHIB3</name>
<gene>
    <name evidence="1" type="primary">msrA</name>
    <name type="ordered locus">SbBS512_E4863</name>
</gene>
<accession>B2TZL3</accession>
<evidence type="ECO:0000255" key="1">
    <source>
        <dbReference type="HAMAP-Rule" id="MF_01401"/>
    </source>
</evidence>
<reference key="1">
    <citation type="submission" date="2008-05" db="EMBL/GenBank/DDBJ databases">
        <title>Complete sequence of Shigella boydii serotype 18 strain BS512.</title>
        <authorList>
            <person name="Rasko D.A."/>
            <person name="Rosovitz M."/>
            <person name="Maurelli A.T."/>
            <person name="Myers G."/>
            <person name="Seshadri R."/>
            <person name="Cer R."/>
            <person name="Jiang L."/>
            <person name="Ravel J."/>
            <person name="Sebastian Y."/>
        </authorList>
    </citation>
    <scope>NUCLEOTIDE SEQUENCE [LARGE SCALE GENOMIC DNA]</scope>
    <source>
        <strain>CDC 3083-94 / BS512</strain>
    </source>
</reference>
<comment type="function">
    <text evidence="1">Has an important function as a repair enzyme for proteins that have been inactivated by oxidation. Catalyzes the reversible oxidation-reduction of methionine sulfoxide in proteins to methionine.</text>
</comment>
<comment type="catalytic activity">
    <reaction evidence="1">
        <text>L-methionyl-[protein] + [thioredoxin]-disulfide + H2O = L-methionyl-(S)-S-oxide-[protein] + [thioredoxin]-dithiol</text>
        <dbReference type="Rhea" id="RHEA:14217"/>
        <dbReference type="Rhea" id="RHEA-COMP:10698"/>
        <dbReference type="Rhea" id="RHEA-COMP:10700"/>
        <dbReference type="Rhea" id="RHEA-COMP:12313"/>
        <dbReference type="Rhea" id="RHEA-COMP:12315"/>
        <dbReference type="ChEBI" id="CHEBI:15377"/>
        <dbReference type="ChEBI" id="CHEBI:16044"/>
        <dbReference type="ChEBI" id="CHEBI:29950"/>
        <dbReference type="ChEBI" id="CHEBI:44120"/>
        <dbReference type="ChEBI" id="CHEBI:50058"/>
        <dbReference type="EC" id="1.8.4.11"/>
    </reaction>
</comment>
<comment type="catalytic activity">
    <reaction evidence="1">
        <text>[thioredoxin]-disulfide + L-methionine + H2O = L-methionine (S)-S-oxide + [thioredoxin]-dithiol</text>
        <dbReference type="Rhea" id="RHEA:19993"/>
        <dbReference type="Rhea" id="RHEA-COMP:10698"/>
        <dbReference type="Rhea" id="RHEA-COMP:10700"/>
        <dbReference type="ChEBI" id="CHEBI:15377"/>
        <dbReference type="ChEBI" id="CHEBI:29950"/>
        <dbReference type="ChEBI" id="CHEBI:50058"/>
        <dbReference type="ChEBI" id="CHEBI:57844"/>
        <dbReference type="ChEBI" id="CHEBI:58772"/>
        <dbReference type="EC" id="1.8.4.11"/>
    </reaction>
</comment>
<comment type="similarity">
    <text evidence="1">Belongs to the MsrA Met sulfoxide reductase family.</text>
</comment>
<proteinExistence type="inferred from homology"/>